<evidence type="ECO:0000255" key="1">
    <source>
        <dbReference type="PROSITE-ProRule" id="PRU00441"/>
    </source>
</evidence>
<evidence type="ECO:0000305" key="2"/>
<organism>
    <name type="scientific">Pyrococcus horikoshii (strain ATCC 700860 / DSM 12428 / JCM 9974 / NBRC 100139 / OT-3)</name>
    <dbReference type="NCBI Taxonomy" id="70601"/>
    <lineage>
        <taxon>Archaea</taxon>
        <taxon>Methanobacteriati</taxon>
        <taxon>Methanobacteriota</taxon>
        <taxon>Thermococci</taxon>
        <taxon>Thermococcales</taxon>
        <taxon>Thermococcaceae</taxon>
        <taxon>Pyrococcus</taxon>
    </lineage>
</organism>
<dbReference type="EMBL" id="BA000001">
    <property type="protein sequence ID" value="BAA30316.1"/>
    <property type="molecule type" value="Genomic_DNA"/>
</dbReference>
<dbReference type="PIR" id="B71065">
    <property type="entry name" value="B71065"/>
</dbReference>
<dbReference type="RefSeq" id="WP_010885303.1">
    <property type="nucleotide sequence ID" value="NC_000961.1"/>
</dbReference>
<dbReference type="SMR" id="O58967"/>
<dbReference type="STRING" id="70601.gene:9378178"/>
<dbReference type="EnsemblBacteria" id="BAA30316">
    <property type="protein sequence ID" value="BAA30316"/>
    <property type="gene ID" value="BAA30316"/>
</dbReference>
<dbReference type="GeneID" id="1443538"/>
<dbReference type="KEGG" id="pho:PH1216"/>
<dbReference type="eggNOG" id="arCOG00159">
    <property type="taxonomic scope" value="Archaea"/>
</dbReference>
<dbReference type="OrthoDB" id="97781at2157"/>
<dbReference type="Proteomes" id="UP000000752">
    <property type="component" value="Chromosome"/>
</dbReference>
<dbReference type="GO" id="GO:0005886">
    <property type="term" value="C:plasma membrane"/>
    <property type="evidence" value="ECO:0007669"/>
    <property type="project" value="UniProtKB-SubCell"/>
</dbReference>
<dbReference type="GO" id="GO:0055085">
    <property type="term" value="P:transmembrane transport"/>
    <property type="evidence" value="ECO:0007669"/>
    <property type="project" value="InterPro"/>
</dbReference>
<dbReference type="CDD" id="cd06261">
    <property type="entry name" value="TM_PBP2"/>
    <property type="match status" value="1"/>
</dbReference>
<dbReference type="Gene3D" id="1.10.3720.10">
    <property type="entry name" value="MetI-like"/>
    <property type="match status" value="1"/>
</dbReference>
<dbReference type="InterPro" id="IPR000515">
    <property type="entry name" value="MetI-like"/>
</dbReference>
<dbReference type="InterPro" id="IPR035906">
    <property type="entry name" value="MetI-like_sf"/>
</dbReference>
<dbReference type="PANTHER" id="PTHR43879">
    <property type="entry name" value="ABC TRANSPORTER PERMEASE PROTEIN"/>
    <property type="match status" value="1"/>
</dbReference>
<dbReference type="PANTHER" id="PTHR43879:SF1">
    <property type="entry name" value="GLUCOSE IMPORT SYSTEM PERMEASE PROTEIN GLCU"/>
    <property type="match status" value="1"/>
</dbReference>
<dbReference type="Pfam" id="PF00528">
    <property type="entry name" value="BPD_transp_1"/>
    <property type="match status" value="1"/>
</dbReference>
<dbReference type="SUPFAM" id="SSF161098">
    <property type="entry name" value="MetI-like"/>
    <property type="match status" value="1"/>
</dbReference>
<dbReference type="PROSITE" id="PS50928">
    <property type="entry name" value="ABC_TM1"/>
    <property type="match status" value="1"/>
</dbReference>
<keyword id="KW-1003">Cell membrane</keyword>
<keyword id="KW-0472">Membrane</keyword>
<keyword id="KW-0812">Transmembrane</keyword>
<keyword id="KW-1133">Transmembrane helix</keyword>
<keyword id="KW-0813">Transport</keyword>
<protein>
    <recommendedName>
        <fullName>Probable ABC transporter permease protein PH1216</fullName>
    </recommendedName>
</protein>
<name>Y1216_PYRHO</name>
<proteinExistence type="inferred from homology"/>
<reference key="1">
    <citation type="journal article" date="1998" name="DNA Res.">
        <title>Complete sequence and gene organization of the genome of a hyper-thermophilic archaebacterium, Pyrococcus horikoshii OT3.</title>
        <authorList>
            <person name="Kawarabayasi Y."/>
            <person name="Sawada M."/>
            <person name="Horikawa H."/>
            <person name="Haikawa Y."/>
            <person name="Hino Y."/>
            <person name="Yamamoto S."/>
            <person name="Sekine M."/>
            <person name="Baba S."/>
            <person name="Kosugi H."/>
            <person name="Hosoyama A."/>
            <person name="Nagai Y."/>
            <person name="Sakai M."/>
            <person name="Ogura K."/>
            <person name="Otsuka R."/>
            <person name="Nakazawa H."/>
            <person name="Takamiya M."/>
            <person name="Ohfuku Y."/>
            <person name="Funahashi T."/>
            <person name="Tanaka T."/>
            <person name="Kudoh Y."/>
            <person name="Yamazaki J."/>
            <person name="Kushida N."/>
            <person name="Oguchi A."/>
            <person name="Aoki K."/>
            <person name="Yoshizawa T."/>
            <person name="Nakamura Y."/>
            <person name="Robb F.T."/>
            <person name="Horikoshi K."/>
            <person name="Masuchi Y."/>
            <person name="Shizuya H."/>
            <person name="Kikuchi H."/>
        </authorList>
    </citation>
    <scope>NUCLEOTIDE SEQUENCE [LARGE SCALE GENOMIC DNA]</scope>
    <source>
        <strain>ATCC 700860 / DSM 12428 / JCM 9974 / NBRC 100139 / OT-3</strain>
    </source>
</reference>
<accession>O58967</accession>
<feature type="chain" id="PRO_0000060312" description="Probable ABC transporter permease protein PH1216">
    <location>
        <begin position="1"/>
        <end position="275"/>
    </location>
</feature>
<feature type="transmembrane region" description="Helical" evidence="1">
    <location>
        <begin position="10"/>
        <end position="30"/>
    </location>
</feature>
<feature type="transmembrane region" description="Helical" evidence="1">
    <location>
        <begin position="73"/>
        <end position="93"/>
    </location>
</feature>
<feature type="transmembrane region" description="Helical" evidence="1">
    <location>
        <begin position="105"/>
        <end position="125"/>
    </location>
</feature>
<feature type="transmembrane region" description="Helical" evidence="1">
    <location>
        <begin position="137"/>
        <end position="157"/>
    </location>
</feature>
<feature type="transmembrane region" description="Helical" evidence="1">
    <location>
        <begin position="181"/>
        <end position="203"/>
    </location>
</feature>
<feature type="transmembrane region" description="Helical" evidence="1">
    <location>
        <begin position="241"/>
        <end position="261"/>
    </location>
</feature>
<feature type="domain" description="ABC transmembrane type-1" evidence="1">
    <location>
        <begin position="68"/>
        <end position="260"/>
    </location>
</feature>
<comment type="function">
    <text>Probably part of a binding-protein-dependent transport system PH1214/15/16. Probably responsible for the translocation of the substrate across the membrane.</text>
</comment>
<comment type="subcellular location">
    <subcellularLocation>
        <location evidence="2">Cell membrane</location>
        <topology evidence="1">Multi-pass membrane protein</topology>
    </subcellularLocation>
</comment>
<comment type="similarity">
    <text evidence="2">Belongs to the binding-protein-dependent transport system permease family. MalFG subfamily.</text>
</comment>
<gene>
    <name type="ordered locus">PH1216</name>
    <name type="ORF">PHBK038</name>
</gene>
<sequence length="275" mass="30683">MRRISPTRFLLYIVLIFLAAWYLLPIWSAITTSTKTGEQVALTTPVQFVFPPTFDPYREAFRELKRPILNSLIFTTFATIFSTILGSIAGFTIAKLVRGRVSRQLLALISFGIFLPYQSILIPLVKIISSLGLYNRILGLILTHTAYGIPITTLLFTNYYYEIPDELVEAAKIDGADPWKIYTKVILPLSKAPFVVTGIYQFTNIWNDYLFGVVLTRGEEAMPATVKLANLKGSFVANWNIQMAGALIVALPTLLIMIALGKYLIRGYTSGALKG</sequence>